<evidence type="ECO:0000255" key="1">
    <source>
        <dbReference type="HAMAP-Rule" id="MF_01114"/>
    </source>
</evidence>
<dbReference type="EMBL" id="CP000705">
    <property type="protein sequence ID" value="ABQ83627.1"/>
    <property type="molecule type" value="Genomic_DNA"/>
</dbReference>
<dbReference type="RefSeq" id="WP_003668670.1">
    <property type="nucleotide sequence ID" value="NC_009513.1"/>
</dbReference>
<dbReference type="SMR" id="A5VLA3"/>
<dbReference type="STRING" id="557436.Lreu_1378"/>
<dbReference type="KEGG" id="lre:Lreu_1378"/>
<dbReference type="PATRIC" id="fig|557436.17.peg.772"/>
<dbReference type="eggNOG" id="COG2137">
    <property type="taxonomic scope" value="Bacteria"/>
</dbReference>
<dbReference type="HOGENOM" id="CLU_066607_4_0_9"/>
<dbReference type="Proteomes" id="UP000001991">
    <property type="component" value="Chromosome"/>
</dbReference>
<dbReference type="GO" id="GO:0005737">
    <property type="term" value="C:cytoplasm"/>
    <property type="evidence" value="ECO:0007669"/>
    <property type="project" value="UniProtKB-SubCell"/>
</dbReference>
<dbReference type="GO" id="GO:0006282">
    <property type="term" value="P:regulation of DNA repair"/>
    <property type="evidence" value="ECO:0007669"/>
    <property type="project" value="UniProtKB-UniRule"/>
</dbReference>
<dbReference type="Gene3D" id="1.10.10.10">
    <property type="entry name" value="Winged helix-like DNA-binding domain superfamily/Winged helix DNA-binding domain"/>
    <property type="match status" value="4"/>
</dbReference>
<dbReference type="HAMAP" id="MF_01114">
    <property type="entry name" value="RecX"/>
    <property type="match status" value="1"/>
</dbReference>
<dbReference type="InterPro" id="IPR053926">
    <property type="entry name" value="RecX_HTH_1st"/>
</dbReference>
<dbReference type="InterPro" id="IPR053924">
    <property type="entry name" value="RecX_HTH_2nd"/>
</dbReference>
<dbReference type="InterPro" id="IPR053925">
    <property type="entry name" value="RecX_HTH_3rd"/>
</dbReference>
<dbReference type="InterPro" id="IPR003783">
    <property type="entry name" value="Regulatory_RecX"/>
</dbReference>
<dbReference type="InterPro" id="IPR036388">
    <property type="entry name" value="WH-like_DNA-bd_sf"/>
</dbReference>
<dbReference type="NCBIfam" id="NF010733">
    <property type="entry name" value="PRK14135.1"/>
    <property type="match status" value="1"/>
</dbReference>
<dbReference type="PANTHER" id="PTHR33602">
    <property type="entry name" value="REGULATORY PROTEIN RECX FAMILY PROTEIN"/>
    <property type="match status" value="1"/>
</dbReference>
<dbReference type="PANTHER" id="PTHR33602:SF1">
    <property type="entry name" value="REGULATORY PROTEIN RECX FAMILY PROTEIN"/>
    <property type="match status" value="1"/>
</dbReference>
<dbReference type="Pfam" id="PF21982">
    <property type="entry name" value="RecX_HTH1"/>
    <property type="match status" value="1"/>
</dbReference>
<dbReference type="Pfam" id="PF02631">
    <property type="entry name" value="RecX_HTH2"/>
    <property type="match status" value="1"/>
</dbReference>
<dbReference type="Pfam" id="PF21981">
    <property type="entry name" value="RecX_HTH3"/>
    <property type="match status" value="2"/>
</dbReference>
<feature type="chain" id="PRO_1000084981" description="Regulatory protein RecX">
    <location>
        <begin position="1"/>
        <end position="264"/>
    </location>
</feature>
<organism>
    <name type="scientific">Limosilactobacillus reuteri (strain DSM 20016)</name>
    <name type="common">Lactobacillus reuteri</name>
    <dbReference type="NCBI Taxonomy" id="557436"/>
    <lineage>
        <taxon>Bacteria</taxon>
        <taxon>Bacillati</taxon>
        <taxon>Bacillota</taxon>
        <taxon>Bacilli</taxon>
        <taxon>Lactobacillales</taxon>
        <taxon>Lactobacillaceae</taxon>
        <taxon>Limosilactobacillus</taxon>
    </lineage>
</organism>
<sequence length="264" mass="30916">MAKISKIEAQKRKGRYNIYLDGKYAFPVAESVLIQFRLMKGTELDEKQIAAIATADQQAKAYSRMLDYLSYQMRTESDIVKKLKEIDTPEEFVESILKKLRGQQLIDDHAYAASYVRTMINTDLKGPGVIRQHLRQKGIGENDIDDALTQFTPEVQAELAKKLAEKLFRRYRNQPERRREQKVQQGLMTKGFSSSVYEMIKDEVVPQPDLEQENDLLAKEAAKQWRRVRCYQGYEREQHFKQAMYRKGFDLDDVQSWLDAQDFQ</sequence>
<name>RECX_LIMRD</name>
<comment type="function">
    <text evidence="1">Modulates RecA activity.</text>
</comment>
<comment type="subcellular location">
    <subcellularLocation>
        <location evidence="1">Cytoplasm</location>
    </subcellularLocation>
</comment>
<comment type="similarity">
    <text evidence="1">Belongs to the RecX family.</text>
</comment>
<proteinExistence type="inferred from homology"/>
<reference key="1">
    <citation type="journal article" date="2011" name="PLoS Genet.">
        <title>The evolution of host specialization in the vertebrate gut symbiont Lactobacillus reuteri.</title>
        <authorList>
            <person name="Frese S.A."/>
            <person name="Benson A.K."/>
            <person name="Tannock G.W."/>
            <person name="Loach D.M."/>
            <person name="Kim J."/>
            <person name="Zhang M."/>
            <person name="Oh P.L."/>
            <person name="Heng N.C."/>
            <person name="Patil P.B."/>
            <person name="Juge N."/>
            <person name="Mackenzie D.A."/>
            <person name="Pearson B.M."/>
            <person name="Lapidus A."/>
            <person name="Dalin E."/>
            <person name="Tice H."/>
            <person name="Goltsman E."/>
            <person name="Land M."/>
            <person name="Hauser L."/>
            <person name="Ivanova N."/>
            <person name="Kyrpides N.C."/>
            <person name="Walter J."/>
        </authorList>
    </citation>
    <scope>NUCLEOTIDE SEQUENCE [LARGE SCALE GENOMIC DNA]</scope>
    <source>
        <strain>DSM 20016</strain>
    </source>
</reference>
<keyword id="KW-0963">Cytoplasm</keyword>
<keyword id="KW-1185">Reference proteome</keyword>
<protein>
    <recommendedName>
        <fullName evidence="1">Regulatory protein RecX</fullName>
    </recommendedName>
</protein>
<accession>A5VLA3</accession>
<gene>
    <name evidence="1" type="primary">recX</name>
    <name type="ordered locus">Lreu_1378</name>
</gene>